<feature type="signal peptide" evidence="2">
    <location>
        <begin position="1"/>
        <end position="21"/>
    </location>
</feature>
<feature type="chain" id="PRO_0000099333" description="Protein A43">
    <location>
        <begin position="22"/>
        <end position="195"/>
    </location>
</feature>
<feature type="topological domain" description="Extracellular">
    <location>
        <begin position="23"/>
        <end position="166"/>
    </location>
</feature>
<feature type="transmembrane region" description="Helical" evidence="2">
    <location>
        <begin position="167"/>
        <end position="187"/>
    </location>
</feature>
<feature type="topological domain" description="Cytoplasmic">
    <location>
        <begin position="188"/>
        <end position="195"/>
    </location>
</feature>
<feature type="glycosylation site" description="N-linked (GlcNAc...) asparagine; by host" evidence="2">
    <location>
        <position position="66"/>
    </location>
</feature>
<feature type="glycosylation site" description="N-linked (GlcNAc...) asparagine; by host" evidence="2">
    <location>
        <position position="115"/>
    </location>
</feature>
<name>PG172_VAR67</name>
<protein>
    <recommendedName>
        <fullName>Protein A43</fullName>
    </recommendedName>
</protein>
<organismHost>
    <name type="scientific">Homo sapiens</name>
    <name type="common">Human</name>
    <dbReference type="NCBI Taxonomy" id="9606"/>
</organismHost>
<evidence type="ECO:0000250" key="1">
    <source>
        <dbReference type="UniProtKB" id="P26671"/>
    </source>
</evidence>
<evidence type="ECO:0000255" key="2"/>
<evidence type="ECO:0000305" key="3"/>
<proteinExistence type="inferred from homology"/>
<dbReference type="EMBL" id="X69198">
    <property type="protein sequence ID" value="CAA49095.1"/>
    <property type="molecule type" value="Genomic_DNA"/>
</dbReference>
<dbReference type="PIR" id="D36853">
    <property type="entry name" value="D36853"/>
</dbReference>
<dbReference type="RefSeq" id="NP_042198.1">
    <property type="nucleotide sequence ID" value="NC_001611.1"/>
</dbReference>
<dbReference type="GeneID" id="1486529"/>
<dbReference type="KEGG" id="vg:1486529"/>
<dbReference type="Proteomes" id="UP000002060">
    <property type="component" value="Segment"/>
</dbReference>
<dbReference type="GO" id="GO:0033644">
    <property type="term" value="C:host cell membrane"/>
    <property type="evidence" value="ECO:0007669"/>
    <property type="project" value="UniProtKB-SubCell"/>
</dbReference>
<dbReference type="GO" id="GO:0044228">
    <property type="term" value="C:host cell surface"/>
    <property type="evidence" value="ECO:0007669"/>
    <property type="project" value="UniProtKB-SubCell"/>
</dbReference>
<dbReference type="GO" id="GO:0016020">
    <property type="term" value="C:membrane"/>
    <property type="evidence" value="ECO:0007669"/>
    <property type="project" value="UniProtKB-KW"/>
</dbReference>
<dbReference type="InterPro" id="IPR009487">
    <property type="entry name" value="Orthopox_A43R"/>
</dbReference>
<dbReference type="Pfam" id="PF06517">
    <property type="entry name" value="Orthopox_A43R"/>
    <property type="match status" value="1"/>
</dbReference>
<accession>P0DSY5</accession>
<accession>P33855</accession>
<keyword id="KW-0325">Glycoprotein</keyword>
<keyword id="KW-1043">Host membrane</keyword>
<keyword id="KW-0426">Late protein</keyword>
<keyword id="KW-0472">Membrane</keyword>
<keyword id="KW-1185">Reference proteome</keyword>
<keyword id="KW-0732">Signal</keyword>
<keyword id="KW-0812">Transmembrane</keyword>
<keyword id="KW-1133">Transmembrane helix</keyword>
<comment type="subcellular location">
    <subcellularLocation>
        <location evidence="1">Host membrane</location>
        <topology evidence="1">Single-pass type I membrane protein</topology>
    </subcellularLocation>
    <subcellularLocation>
        <location evidence="1">Host cell surface</location>
    </subcellularLocation>
</comment>
<comment type="similarity">
    <text evidence="3">Belongs to the orthopoxvirus OPG172 protein family.</text>
</comment>
<sequence length="195" mass="22783">MMIKWIISILTMSIMPVLVYSSSIFRFRSEDVELCYGNLYFDRIYNNVVNIKYIPEHIPYKYNFINRTFSVDELDNNVFFTHGYFLKHKYGSLNPSLIVSLSGNLKYNDIQCSVNVSCLIKNLATSISTILTSKHKTYSLHRSKCITIIGYDSIIWYKDINDKYNDIYDFTAICMLIASTLIVTIYVFKKIKMNS</sequence>
<reference key="1">
    <citation type="journal article" date="1993" name="FEBS Lett.">
        <title>Genes of variola and vaccinia viruses necessary to overcome the host protective mechanisms.</title>
        <authorList>
            <person name="Shchelkunov S.N."/>
            <person name="Blinov V.M."/>
            <person name="Sandakhchiev L.S."/>
        </authorList>
    </citation>
    <scope>NUCLEOTIDE SEQUENCE [GENOMIC DNA]</scope>
</reference>
<organism>
    <name type="scientific">Variola virus (isolate Human/India/Ind3/1967)</name>
    <name type="common">VARV</name>
    <name type="synonym">Smallpox virus</name>
    <dbReference type="NCBI Taxonomy" id="587200"/>
    <lineage>
        <taxon>Viruses</taxon>
        <taxon>Varidnaviria</taxon>
        <taxon>Bamfordvirae</taxon>
        <taxon>Nucleocytoviricota</taxon>
        <taxon>Pokkesviricetes</taxon>
        <taxon>Chitovirales</taxon>
        <taxon>Poxviridae</taxon>
        <taxon>Chordopoxvirinae</taxon>
        <taxon>Orthopoxvirus</taxon>
        <taxon>Variola virus</taxon>
    </lineage>
</organism>
<gene>
    <name type="primary">OPG172</name>
    <name type="ORF">A43R</name>
    <name type="ORF">A46R</name>
    <name type="ORF">A48R</name>
</gene>